<keyword id="KW-1185">Reference proteome</keyword>
<keyword id="KW-0687">Ribonucleoprotein</keyword>
<keyword id="KW-0689">Ribosomal protein</keyword>
<keyword id="KW-0694">RNA-binding</keyword>
<keyword id="KW-0699">rRNA-binding</keyword>
<accession>P66598</accession>
<accession>Q8DXY1</accession>
<accession>Q8E3K0</accession>
<organism>
    <name type="scientific">Streptococcus agalactiae serotype V (strain ATCC BAA-611 / 2603 V/R)</name>
    <dbReference type="NCBI Taxonomy" id="208435"/>
    <lineage>
        <taxon>Bacteria</taxon>
        <taxon>Bacillati</taxon>
        <taxon>Bacillota</taxon>
        <taxon>Bacilli</taxon>
        <taxon>Lactobacillales</taxon>
        <taxon>Streptococcaceae</taxon>
        <taxon>Streptococcus</taxon>
    </lineage>
</organism>
<name>RS6_STRA5</name>
<evidence type="ECO:0000255" key="1">
    <source>
        <dbReference type="HAMAP-Rule" id="MF_00360"/>
    </source>
</evidence>
<evidence type="ECO:0000305" key="2"/>
<protein>
    <recommendedName>
        <fullName evidence="1">Small ribosomal subunit protein bS6</fullName>
    </recommendedName>
    <alternativeName>
        <fullName evidence="2">30S ribosomal protein S6</fullName>
    </alternativeName>
</protein>
<proteinExistence type="inferred from homology"/>
<gene>
    <name evidence="1" type="primary">rpsF</name>
    <name type="ordered locus">SAG1714</name>
</gene>
<sequence>MAKYEILYIIRPNIEEEAKNALVARFDSILSDNGATVVESKDWEKRRLAYEIQDFTEGLYHIVNVEAEDAVALNEFDRLSKINGDILRHMIVKVD</sequence>
<comment type="function">
    <text evidence="1">Binds together with bS18 to 16S ribosomal RNA.</text>
</comment>
<comment type="similarity">
    <text evidence="1">Belongs to the bacterial ribosomal protein bS6 family.</text>
</comment>
<reference key="1">
    <citation type="journal article" date="2002" name="Proc. Natl. Acad. Sci. U.S.A.">
        <title>Complete genome sequence and comparative genomic analysis of an emerging human pathogen, serotype V Streptococcus agalactiae.</title>
        <authorList>
            <person name="Tettelin H."/>
            <person name="Masignani V."/>
            <person name="Cieslewicz M.J."/>
            <person name="Eisen J.A."/>
            <person name="Peterson S.N."/>
            <person name="Wessels M.R."/>
            <person name="Paulsen I.T."/>
            <person name="Nelson K.E."/>
            <person name="Margarit I."/>
            <person name="Read T.D."/>
            <person name="Madoff L.C."/>
            <person name="Wolf A.M."/>
            <person name="Beanan M.J."/>
            <person name="Brinkac L.M."/>
            <person name="Daugherty S.C."/>
            <person name="DeBoy R.T."/>
            <person name="Durkin A.S."/>
            <person name="Kolonay J.F."/>
            <person name="Madupu R."/>
            <person name="Lewis M.R."/>
            <person name="Radune D."/>
            <person name="Fedorova N.B."/>
            <person name="Scanlan D."/>
            <person name="Khouri H.M."/>
            <person name="Mulligan S."/>
            <person name="Carty H.A."/>
            <person name="Cline R.T."/>
            <person name="Van Aken S.E."/>
            <person name="Gill J."/>
            <person name="Scarselli M."/>
            <person name="Mora M."/>
            <person name="Iacobini E.T."/>
            <person name="Brettoni C."/>
            <person name="Galli G."/>
            <person name="Mariani M."/>
            <person name="Vegni F."/>
            <person name="Maione D."/>
            <person name="Rinaudo D."/>
            <person name="Rappuoli R."/>
            <person name="Telford J.L."/>
            <person name="Kasper D.L."/>
            <person name="Grandi G."/>
            <person name="Fraser C.M."/>
        </authorList>
    </citation>
    <scope>NUCLEOTIDE SEQUENCE [LARGE SCALE GENOMIC DNA]</scope>
    <source>
        <strain>ATCC BAA-611 / 2603 V/R</strain>
    </source>
</reference>
<dbReference type="EMBL" id="AE009948">
    <property type="protein sequence ID" value="AAN00577.1"/>
    <property type="molecule type" value="Genomic_DNA"/>
</dbReference>
<dbReference type="RefSeq" id="NP_688704.1">
    <property type="nucleotide sequence ID" value="NC_004116.1"/>
</dbReference>
<dbReference type="RefSeq" id="WP_001151773.1">
    <property type="nucleotide sequence ID" value="NC_004116.1"/>
</dbReference>
<dbReference type="SMR" id="P66598"/>
<dbReference type="STRING" id="208435.SAG1714"/>
<dbReference type="GeneID" id="66886554"/>
<dbReference type="KEGG" id="sag:SAG1714"/>
<dbReference type="PATRIC" id="fig|208435.3.peg.1722"/>
<dbReference type="HOGENOM" id="CLU_113441_5_3_9"/>
<dbReference type="OrthoDB" id="9812702at2"/>
<dbReference type="Proteomes" id="UP000000821">
    <property type="component" value="Chromosome"/>
</dbReference>
<dbReference type="GO" id="GO:0005737">
    <property type="term" value="C:cytoplasm"/>
    <property type="evidence" value="ECO:0007669"/>
    <property type="project" value="UniProtKB-ARBA"/>
</dbReference>
<dbReference type="GO" id="GO:1990904">
    <property type="term" value="C:ribonucleoprotein complex"/>
    <property type="evidence" value="ECO:0007669"/>
    <property type="project" value="UniProtKB-KW"/>
</dbReference>
<dbReference type="GO" id="GO:0005840">
    <property type="term" value="C:ribosome"/>
    <property type="evidence" value="ECO:0007669"/>
    <property type="project" value="UniProtKB-KW"/>
</dbReference>
<dbReference type="GO" id="GO:0070181">
    <property type="term" value="F:small ribosomal subunit rRNA binding"/>
    <property type="evidence" value="ECO:0007669"/>
    <property type="project" value="TreeGrafter"/>
</dbReference>
<dbReference type="GO" id="GO:0003735">
    <property type="term" value="F:structural constituent of ribosome"/>
    <property type="evidence" value="ECO:0007669"/>
    <property type="project" value="InterPro"/>
</dbReference>
<dbReference type="GO" id="GO:0006412">
    <property type="term" value="P:translation"/>
    <property type="evidence" value="ECO:0007669"/>
    <property type="project" value="UniProtKB-UniRule"/>
</dbReference>
<dbReference type="CDD" id="cd00473">
    <property type="entry name" value="bS6"/>
    <property type="match status" value="1"/>
</dbReference>
<dbReference type="FunFam" id="3.30.70.60:FF:000002">
    <property type="entry name" value="30S ribosomal protein S6"/>
    <property type="match status" value="1"/>
</dbReference>
<dbReference type="Gene3D" id="3.30.70.60">
    <property type="match status" value="1"/>
</dbReference>
<dbReference type="HAMAP" id="MF_00360">
    <property type="entry name" value="Ribosomal_bS6"/>
    <property type="match status" value="1"/>
</dbReference>
<dbReference type="InterPro" id="IPR000529">
    <property type="entry name" value="Ribosomal_bS6"/>
</dbReference>
<dbReference type="InterPro" id="IPR035980">
    <property type="entry name" value="Ribosomal_bS6_sf"/>
</dbReference>
<dbReference type="InterPro" id="IPR020814">
    <property type="entry name" value="Ribosomal_S6_plastid/chlpt"/>
</dbReference>
<dbReference type="InterPro" id="IPR014717">
    <property type="entry name" value="Transl_elong_EF1B/ribsomal_bS6"/>
</dbReference>
<dbReference type="NCBIfam" id="TIGR00166">
    <property type="entry name" value="S6"/>
    <property type="match status" value="1"/>
</dbReference>
<dbReference type="PANTHER" id="PTHR21011">
    <property type="entry name" value="MITOCHONDRIAL 28S RIBOSOMAL PROTEIN S6"/>
    <property type="match status" value="1"/>
</dbReference>
<dbReference type="PANTHER" id="PTHR21011:SF1">
    <property type="entry name" value="SMALL RIBOSOMAL SUBUNIT PROTEIN BS6M"/>
    <property type="match status" value="1"/>
</dbReference>
<dbReference type="Pfam" id="PF01250">
    <property type="entry name" value="Ribosomal_S6"/>
    <property type="match status" value="1"/>
</dbReference>
<dbReference type="SUPFAM" id="SSF54995">
    <property type="entry name" value="Ribosomal protein S6"/>
    <property type="match status" value="1"/>
</dbReference>
<feature type="chain" id="PRO_0000176846" description="Small ribosomal subunit protein bS6">
    <location>
        <begin position="1"/>
        <end position="95"/>
    </location>
</feature>